<reference key="1">
    <citation type="submission" date="2007-11" db="EMBL/GenBank/DDBJ databases">
        <authorList>
            <consortium name="The Salmonella enterica serovar Paratyphi B Genome Sequencing Project"/>
            <person name="McClelland M."/>
            <person name="Sanderson E.K."/>
            <person name="Porwollik S."/>
            <person name="Spieth J."/>
            <person name="Clifton W.S."/>
            <person name="Fulton R."/>
            <person name="Cordes M."/>
            <person name="Wollam A."/>
            <person name="Shah N."/>
            <person name="Pepin K."/>
            <person name="Bhonagiri V."/>
            <person name="Nash W."/>
            <person name="Johnson M."/>
            <person name="Thiruvilangam P."/>
            <person name="Wilson R."/>
        </authorList>
    </citation>
    <scope>NUCLEOTIDE SEQUENCE [LARGE SCALE GENOMIC DNA]</scope>
    <source>
        <strain>ATCC BAA-1250 / SPB7</strain>
    </source>
</reference>
<evidence type="ECO:0000255" key="1">
    <source>
        <dbReference type="HAMAP-Rule" id="MF_02010"/>
    </source>
</evidence>
<evidence type="ECO:0000305" key="2"/>
<proteinExistence type="inferred from homology"/>
<comment type="function">
    <text evidence="1">Inhibits RpoS proteolysis by regulating RssB activity, thereby increasing the stability of the sigma stress factor RpoS during oxidative stress. Its effect on RpoS stability is due to its interaction with RssB, which probably blocks the interaction of RssB with RpoS, and the consequent delivery of the RssB-RpoS complex to the ClpXP protein degradation pathway.</text>
</comment>
<comment type="subunit">
    <text evidence="1">Interacts with RssB.</text>
</comment>
<comment type="subcellular location">
    <subcellularLocation>
        <location evidence="1">Cytoplasm</location>
    </subcellularLocation>
</comment>
<comment type="similarity">
    <text evidence="1">Belongs to the GpW/Gp25 family. IraD subfamily.</text>
</comment>
<comment type="sequence caution" evidence="2">
    <conflict type="erroneous initiation">
        <sequence resource="EMBL-CDS" id="ABX69234"/>
    </conflict>
</comment>
<name>IRAD_SALPB</name>
<accession>A9N4T4</accession>
<keyword id="KW-0963">Cytoplasm</keyword>
<keyword id="KW-0346">Stress response</keyword>
<gene>
    <name evidence="1" type="primary">iraD</name>
    <name type="ordered locus">SPAB_03904</name>
</gene>
<protein>
    <recommendedName>
        <fullName evidence="1">Anti-adapter protein IraD</fullName>
    </recommendedName>
</protein>
<sequence length="126" mass="14436">MMTPTIPVALFDRLLVEGISPHELVRRKLMCLFNSCAVPGGETLPPLLTRGMPEWHEVNVGDKRVLNWFCRELRAAILRYEPSINMLKVSVKDAHHQTLALSLEAMLQDESEPLRLEIAYSNGRWR</sequence>
<feature type="chain" id="PRO_0000337900" description="Anti-adapter protein IraD">
    <location>
        <begin position="1"/>
        <end position="126"/>
    </location>
</feature>
<organism>
    <name type="scientific">Salmonella paratyphi B (strain ATCC BAA-1250 / SPB7)</name>
    <dbReference type="NCBI Taxonomy" id="1016998"/>
    <lineage>
        <taxon>Bacteria</taxon>
        <taxon>Pseudomonadati</taxon>
        <taxon>Pseudomonadota</taxon>
        <taxon>Gammaproteobacteria</taxon>
        <taxon>Enterobacterales</taxon>
        <taxon>Enterobacteriaceae</taxon>
        <taxon>Salmonella</taxon>
    </lineage>
</organism>
<dbReference type="EMBL" id="CP000886">
    <property type="protein sequence ID" value="ABX69234.1"/>
    <property type="status" value="ALT_INIT"/>
    <property type="molecule type" value="Genomic_DNA"/>
</dbReference>
<dbReference type="RefSeq" id="WP_000988938.1">
    <property type="nucleotide sequence ID" value="NC_010102.1"/>
</dbReference>
<dbReference type="SMR" id="A9N4T4"/>
<dbReference type="KEGG" id="spq:SPAB_03904"/>
<dbReference type="PATRIC" id="fig|1016998.12.peg.3678"/>
<dbReference type="HOGENOM" id="CLU_2584392_0_0_6"/>
<dbReference type="Proteomes" id="UP000008556">
    <property type="component" value="Chromosome"/>
</dbReference>
<dbReference type="GO" id="GO:0005737">
    <property type="term" value="C:cytoplasm"/>
    <property type="evidence" value="ECO:0007669"/>
    <property type="project" value="UniProtKB-SubCell"/>
</dbReference>
<dbReference type="GO" id="GO:0043856">
    <property type="term" value="F:anti-sigma factor antagonist activity"/>
    <property type="evidence" value="ECO:0007669"/>
    <property type="project" value="InterPro"/>
</dbReference>
<dbReference type="GO" id="GO:0034599">
    <property type="term" value="P:cellular response to oxidative stress"/>
    <property type="evidence" value="ECO:0007669"/>
    <property type="project" value="UniProtKB-UniRule"/>
</dbReference>
<dbReference type="GO" id="GO:0006974">
    <property type="term" value="P:DNA damage response"/>
    <property type="evidence" value="ECO:0007669"/>
    <property type="project" value="InterPro"/>
</dbReference>
<dbReference type="HAMAP" id="MF_02010">
    <property type="entry name" value="IraD"/>
    <property type="match status" value="1"/>
</dbReference>
<dbReference type="InterPro" id="IPR023776">
    <property type="entry name" value="Anti-adapt_IraD"/>
</dbReference>
<dbReference type="InterPro" id="IPR007048">
    <property type="entry name" value="IraD/Gp25-like"/>
</dbReference>
<dbReference type="NCBIfam" id="NF010727">
    <property type="entry name" value="PRK14128.1-2"/>
    <property type="match status" value="1"/>
</dbReference>
<dbReference type="Pfam" id="PF04965">
    <property type="entry name" value="GPW_gp25"/>
    <property type="match status" value="1"/>
</dbReference>